<comment type="function">
    <text evidence="1">Transcription factor required for terminalia development. Negative regulator of the JAK/STAT pathway: represses JAK/STAT-dependent expression of ventral veins lacking (vvl) in the posterior spiracles (By similarity).</text>
</comment>
<comment type="subcellular location">
    <subcellularLocation>
        <location evidence="1">Nucleus</location>
    </subcellularLocation>
</comment>
<gene>
    <name evidence="1" type="primary">ken1</name>
    <name type="ORF">CPIJ016082</name>
</gene>
<dbReference type="EMBL" id="DS232537">
    <property type="protein sequence ID" value="EDS43145.1"/>
    <property type="molecule type" value="Genomic_DNA"/>
</dbReference>
<dbReference type="RefSeq" id="XP_001866298.1">
    <property type="nucleotide sequence ID" value="XM_001866263.1"/>
</dbReference>
<dbReference type="SMR" id="B0X9H6"/>
<dbReference type="FunCoup" id="B0X9H6">
    <property type="interactions" value="521"/>
</dbReference>
<dbReference type="STRING" id="7176.B0X9H6"/>
<dbReference type="EnsemblMetazoa" id="CPIJ016082-RA">
    <property type="protein sequence ID" value="CPIJ016082-PA"/>
    <property type="gene ID" value="CPIJ016082"/>
</dbReference>
<dbReference type="EnsemblMetazoa" id="CQUJHB012418.R19222">
    <property type="protein sequence ID" value="CQUJHB012418.P19222"/>
    <property type="gene ID" value="CQUJHB012418"/>
</dbReference>
<dbReference type="EnsemblMetazoa" id="XM_038254950.1">
    <property type="protein sequence ID" value="XP_038110878.1"/>
    <property type="gene ID" value="LOC6049568"/>
</dbReference>
<dbReference type="KEGG" id="cqu:CpipJ_CPIJ016082"/>
<dbReference type="VEuPathDB" id="VectorBase:CPIJ016082"/>
<dbReference type="VEuPathDB" id="VectorBase:CQUJHB012418"/>
<dbReference type="eggNOG" id="KOG1721">
    <property type="taxonomic scope" value="Eukaryota"/>
</dbReference>
<dbReference type="HOGENOM" id="CLU_019233_0_0_1"/>
<dbReference type="InParanoid" id="B0X9H6"/>
<dbReference type="OMA" id="QQFVYQW"/>
<dbReference type="OrthoDB" id="8117402at2759"/>
<dbReference type="PhylomeDB" id="B0X9H6"/>
<dbReference type="Proteomes" id="UP000002320">
    <property type="component" value="Unassembled WGS sequence"/>
</dbReference>
<dbReference type="GO" id="GO:0005634">
    <property type="term" value="C:nucleus"/>
    <property type="evidence" value="ECO:0000250"/>
    <property type="project" value="UniProtKB"/>
</dbReference>
<dbReference type="GO" id="GO:0003677">
    <property type="term" value="F:DNA binding"/>
    <property type="evidence" value="ECO:0000250"/>
    <property type="project" value="UniProtKB"/>
</dbReference>
<dbReference type="GO" id="GO:0003700">
    <property type="term" value="F:DNA-binding transcription factor activity"/>
    <property type="evidence" value="ECO:0000250"/>
    <property type="project" value="UniProtKB"/>
</dbReference>
<dbReference type="GO" id="GO:0000978">
    <property type="term" value="F:RNA polymerase II cis-regulatory region sequence-specific DNA binding"/>
    <property type="evidence" value="ECO:0007669"/>
    <property type="project" value="TreeGrafter"/>
</dbReference>
<dbReference type="GO" id="GO:0008270">
    <property type="term" value="F:zinc ion binding"/>
    <property type="evidence" value="ECO:0007669"/>
    <property type="project" value="UniProtKB-KW"/>
</dbReference>
<dbReference type="GO" id="GO:0045497">
    <property type="term" value="P:female analia development"/>
    <property type="evidence" value="ECO:0000250"/>
    <property type="project" value="UniProtKB"/>
</dbReference>
<dbReference type="GO" id="GO:0030540">
    <property type="term" value="P:female genitalia development"/>
    <property type="evidence" value="ECO:0000250"/>
    <property type="project" value="UniProtKB"/>
</dbReference>
<dbReference type="GO" id="GO:0045496">
    <property type="term" value="P:male analia development"/>
    <property type="evidence" value="ECO:0000250"/>
    <property type="project" value="UniProtKB"/>
</dbReference>
<dbReference type="GO" id="GO:0030539">
    <property type="term" value="P:male genitalia development"/>
    <property type="evidence" value="ECO:0000250"/>
    <property type="project" value="UniProtKB"/>
</dbReference>
<dbReference type="GO" id="GO:0006355">
    <property type="term" value="P:regulation of DNA-templated transcription"/>
    <property type="evidence" value="ECO:0000250"/>
    <property type="project" value="UniProtKB"/>
</dbReference>
<dbReference type="GO" id="GO:0006357">
    <property type="term" value="P:regulation of transcription by RNA polymerase II"/>
    <property type="evidence" value="ECO:0007669"/>
    <property type="project" value="TreeGrafter"/>
</dbReference>
<dbReference type="CDD" id="cd18315">
    <property type="entry name" value="BTB_POZ_BAB-like"/>
    <property type="match status" value="1"/>
</dbReference>
<dbReference type="FunFam" id="3.30.160.60:FF:002034">
    <property type="entry name" value="transcription factor Ken"/>
    <property type="match status" value="1"/>
</dbReference>
<dbReference type="FunFam" id="3.30.160.60:FF:002059">
    <property type="entry name" value="transcription factor Ken"/>
    <property type="match status" value="1"/>
</dbReference>
<dbReference type="FunFam" id="3.30.710.10:FF:000389">
    <property type="entry name" value="Transcription factor Ken 2"/>
    <property type="match status" value="1"/>
</dbReference>
<dbReference type="Gene3D" id="3.30.160.60">
    <property type="entry name" value="Classic Zinc Finger"/>
    <property type="match status" value="2"/>
</dbReference>
<dbReference type="Gene3D" id="3.30.710.10">
    <property type="entry name" value="Potassium Channel Kv1.1, Chain A"/>
    <property type="match status" value="1"/>
</dbReference>
<dbReference type="InterPro" id="IPR000210">
    <property type="entry name" value="BTB/POZ_dom"/>
</dbReference>
<dbReference type="InterPro" id="IPR051497">
    <property type="entry name" value="Dev/Hematopoietic_TF"/>
</dbReference>
<dbReference type="InterPro" id="IPR011333">
    <property type="entry name" value="SKP1/BTB/POZ_sf"/>
</dbReference>
<dbReference type="InterPro" id="IPR036236">
    <property type="entry name" value="Znf_C2H2_sf"/>
</dbReference>
<dbReference type="InterPro" id="IPR013087">
    <property type="entry name" value="Znf_C2H2_type"/>
</dbReference>
<dbReference type="PANTHER" id="PTHR45993">
    <property type="entry name" value="B-CELL LYMPHOMA/LEUKEMIA 11"/>
    <property type="match status" value="1"/>
</dbReference>
<dbReference type="PANTHER" id="PTHR45993:SF7">
    <property type="entry name" value="TRANSCRIPTION FACTOR KEN"/>
    <property type="match status" value="1"/>
</dbReference>
<dbReference type="Pfam" id="PF00651">
    <property type="entry name" value="BTB"/>
    <property type="match status" value="1"/>
</dbReference>
<dbReference type="Pfam" id="PF00096">
    <property type="entry name" value="zf-C2H2"/>
    <property type="match status" value="1"/>
</dbReference>
<dbReference type="SMART" id="SM00225">
    <property type="entry name" value="BTB"/>
    <property type="match status" value="1"/>
</dbReference>
<dbReference type="SMART" id="SM00355">
    <property type="entry name" value="ZnF_C2H2"/>
    <property type="match status" value="3"/>
</dbReference>
<dbReference type="SUPFAM" id="SSF57667">
    <property type="entry name" value="beta-beta-alpha zinc fingers"/>
    <property type="match status" value="1"/>
</dbReference>
<dbReference type="SUPFAM" id="SSF54695">
    <property type="entry name" value="POZ domain"/>
    <property type="match status" value="1"/>
</dbReference>
<dbReference type="PROSITE" id="PS50097">
    <property type="entry name" value="BTB"/>
    <property type="match status" value="1"/>
</dbReference>
<dbReference type="PROSITE" id="PS00028">
    <property type="entry name" value="ZINC_FINGER_C2H2_1"/>
    <property type="match status" value="3"/>
</dbReference>
<dbReference type="PROSITE" id="PS50157">
    <property type="entry name" value="ZINC_FINGER_C2H2_2"/>
    <property type="match status" value="2"/>
</dbReference>
<sequence>MCSKRELRMLMLHYSKHGECILQEIGAAFRGEHATDLLLICDGKETVRAHKLVLAAASPLIRMILEETPVLDGVTTVYFPEVQVSYFRLLLDFLYSGQVYVRSVEEYHHLQDLLALLQIKASIWKNSDGSGEGEPRKSEPLVDINRNTEGITGSSVVHQHPSRRRRSKSQDSLSGDSASGGGGTGSQAGTPKKVSVKSERHSAGSSVDGDGDRDREENLEYLDEVEEAIIKSNNNHPLHPHQHHLVAGSGGHHHHHHHHHHHRQLHQIKTRSRRSDPSANRRRSSSDPVNLSIVKQQQDVDSDDANIDVETIGTATTKTLLPPRYLDPFRTKRKAAAYYIHPADAEALKPMDHEGLLHNSPDNYVVTPHRKRRPGFHNSPAQNPPFVPSYLDDLRARSKCFLSAPPTYLPELRPGSPTSVRHAEIAAGLSNNNNSSSNNNNNNNRIRPPSADNKLAVAPFVYPWPTAALAGLPGGPSDLLGLPYVHGGGPNAETSPADLLQQMKNFENSQAELSARASAAGGGGGGSGGNGSGSGGVASGGGGGSMGGNTAVREYRCEYCGKTFGMSWNLKTHLRVHTGEKPFACRLCVAMFKQKAHLLKHLCSVHRNIINAPEAGGRYTCCFCSLVFETLQELVRHLSGHHNNLLLSKNLHE</sequence>
<proteinExistence type="inferred from homology"/>
<keyword id="KW-0217">Developmental protein</keyword>
<keyword id="KW-0238">DNA-binding</keyword>
<keyword id="KW-0479">Metal-binding</keyword>
<keyword id="KW-0539">Nucleus</keyword>
<keyword id="KW-1185">Reference proteome</keyword>
<keyword id="KW-0677">Repeat</keyword>
<keyword id="KW-0678">Repressor</keyword>
<keyword id="KW-0804">Transcription</keyword>
<keyword id="KW-0805">Transcription regulation</keyword>
<keyword id="KW-0862">Zinc</keyword>
<keyword id="KW-0863">Zinc-finger</keyword>
<name>KEN1_CULQU</name>
<protein>
    <recommendedName>
        <fullName evidence="1">Transcription factor Ken 1</fullName>
    </recommendedName>
</protein>
<evidence type="ECO:0000250" key="1">
    <source>
        <dbReference type="UniProtKB" id="O77459"/>
    </source>
</evidence>
<evidence type="ECO:0000255" key="2">
    <source>
        <dbReference type="PROSITE-ProRule" id="PRU00037"/>
    </source>
</evidence>
<evidence type="ECO:0000255" key="3">
    <source>
        <dbReference type="PROSITE-ProRule" id="PRU00042"/>
    </source>
</evidence>
<evidence type="ECO:0000256" key="4">
    <source>
        <dbReference type="SAM" id="MobiDB-lite"/>
    </source>
</evidence>
<evidence type="ECO:0000312" key="5">
    <source>
        <dbReference type="EMBL" id="EDS43145.1"/>
    </source>
</evidence>
<reference evidence="5" key="1">
    <citation type="submission" date="2007-03" db="EMBL/GenBank/DDBJ databases">
        <title>Annotation of Culex pipiens quinquefasciatus.</title>
        <authorList>
            <consortium name="The Broad Institute Genome Sequencing Platform"/>
            <person name="Atkinson P.W."/>
            <person name="Hemingway J."/>
            <person name="Christensen B.M."/>
            <person name="Higgs S."/>
            <person name="Kodira C.D."/>
            <person name="Hannick L.I."/>
            <person name="Megy K."/>
            <person name="O'Leary S.B."/>
            <person name="Pearson M."/>
            <person name="Haas B.J."/>
            <person name="Mauceli E."/>
            <person name="Wortman J.R."/>
            <person name="Lee N.H."/>
            <person name="Guigo R."/>
            <person name="Stanke M."/>
            <person name="Alvarado L."/>
            <person name="Amedeo P."/>
            <person name="Antoine C.H."/>
            <person name="Arensburger P."/>
            <person name="Bidwell S.L."/>
            <person name="Crawford M."/>
            <person name="Camaro F."/>
            <person name="Devon K."/>
            <person name="Engels R."/>
            <person name="Hammond M."/>
            <person name="Howarth C."/>
            <person name="Koehrsen M."/>
            <person name="Lawson D."/>
            <person name="Montgomery P."/>
            <person name="Nene V."/>
            <person name="Nusbaum C."/>
            <person name="Puiu D."/>
            <person name="Romero-Severson J."/>
            <person name="Severson D.W."/>
            <person name="Shumway M."/>
            <person name="Sisk P."/>
            <person name="Stolte C."/>
            <person name="Zeng Q."/>
            <person name="Eisenstadt E."/>
            <person name="Fraser-Liggett C.M."/>
            <person name="Strausberg R."/>
            <person name="Galagan J."/>
            <person name="Birren B."/>
            <person name="Collins F.H."/>
        </authorList>
    </citation>
    <scope>NUCLEOTIDE SEQUENCE [LARGE SCALE GENOMIC DNA]</scope>
    <source>
        <strain evidence="5">JHB</strain>
    </source>
</reference>
<feature type="chain" id="PRO_0000355089" description="Transcription factor Ken 1">
    <location>
        <begin position="1"/>
        <end position="653"/>
    </location>
</feature>
<feature type="domain" description="BTB" evidence="2">
    <location>
        <begin position="35"/>
        <end position="103"/>
    </location>
</feature>
<feature type="zinc finger region" description="C2H2-type 1" evidence="3">
    <location>
        <begin position="555"/>
        <end position="577"/>
    </location>
</feature>
<feature type="zinc finger region" description="C2H2-type 2" evidence="3">
    <location>
        <begin position="583"/>
        <end position="606"/>
    </location>
</feature>
<feature type="zinc finger region" description="C2H2-type 3" evidence="3">
    <location>
        <begin position="619"/>
        <end position="641"/>
    </location>
</feature>
<feature type="region of interest" description="Disordered" evidence="4">
    <location>
        <begin position="126"/>
        <end position="215"/>
    </location>
</feature>
<feature type="region of interest" description="Disordered" evidence="4">
    <location>
        <begin position="234"/>
        <end position="305"/>
    </location>
</feature>
<feature type="region of interest" description="Disordered" evidence="4">
    <location>
        <begin position="429"/>
        <end position="451"/>
    </location>
</feature>
<feature type="region of interest" description="Disordered" evidence="4">
    <location>
        <begin position="512"/>
        <end position="534"/>
    </location>
</feature>
<feature type="compositionally biased region" description="Polar residues" evidence="4">
    <location>
        <begin position="145"/>
        <end position="157"/>
    </location>
</feature>
<feature type="compositionally biased region" description="Basic residues" evidence="4">
    <location>
        <begin position="251"/>
        <end position="272"/>
    </location>
</feature>
<feature type="compositionally biased region" description="Polar residues" evidence="4">
    <location>
        <begin position="286"/>
        <end position="299"/>
    </location>
</feature>
<feature type="compositionally biased region" description="Low complexity" evidence="4">
    <location>
        <begin position="430"/>
        <end position="444"/>
    </location>
</feature>
<feature type="compositionally biased region" description="Gly residues" evidence="4">
    <location>
        <begin position="520"/>
        <end position="534"/>
    </location>
</feature>
<organism>
    <name type="scientific">Culex quinquefasciatus</name>
    <name type="common">Southern house mosquito</name>
    <name type="synonym">Culex pungens</name>
    <dbReference type="NCBI Taxonomy" id="7176"/>
    <lineage>
        <taxon>Eukaryota</taxon>
        <taxon>Metazoa</taxon>
        <taxon>Ecdysozoa</taxon>
        <taxon>Arthropoda</taxon>
        <taxon>Hexapoda</taxon>
        <taxon>Insecta</taxon>
        <taxon>Pterygota</taxon>
        <taxon>Neoptera</taxon>
        <taxon>Endopterygota</taxon>
        <taxon>Diptera</taxon>
        <taxon>Nematocera</taxon>
        <taxon>Culicoidea</taxon>
        <taxon>Culicidae</taxon>
        <taxon>Culicinae</taxon>
        <taxon>Culicini</taxon>
        <taxon>Culex</taxon>
        <taxon>Culex</taxon>
    </lineage>
</organism>
<accession>B0X9H6</accession>